<gene>
    <name type="primary">sap</name>
    <name type="ordered locus">BA_0885</name>
    <name type="ordered locus">GBAA_0885</name>
    <name type="ordered locus">BAS0841</name>
</gene>
<comment type="function">
    <text>The S-layer is a paracrystalline mono-layered assembly of proteins which coat the surface of bacteria.</text>
</comment>
<comment type="subcellular location">
    <subcellularLocation>
        <location>Secreted</location>
        <location>Cell wall</location>
        <location>S-layer</location>
    </subcellularLocation>
</comment>
<comment type="PTM">
    <text>Probably glycosylated.</text>
</comment>
<protein>
    <recommendedName>
        <fullName>S-layer protein sap</fullName>
    </recommendedName>
    <alternativeName>
        <fullName>Surface array protein</fullName>
    </alternativeName>
    <alternativeName>
        <fullName>Surface layer protein</fullName>
    </alternativeName>
</protein>
<sequence>MAKTNSYKKVIAGTMTAAMVAGVVSPVAAAGKTFPDVPADHWGIDSINYLVEKGAVKGNDKGMFEPGKELTRAEAATMMAQILNLPIDKDAKPSFADSQGQWYTPFIAAVEKAGVIKGTGNGFEPNGKIDRVSMASLLVEAYKLDTKVNGTPATKFKDLETLNWGKEKANILVELGISVGTGDQWEPKKTVTKAEAAQFIAKTDKQFGTEAAKVESAKAVTTQKVEVKFSKAVEKLTKEDIKVTNKANNDKVLVKEVTLSEDKKSATVELYSNLAAKQTYTVDVNKVGKTEVAVGSLEAKTIEMADQTVVADEPTALQFTVKDENGTEVVSPEGIEFVTPAAEKINAKGEITLAKGTSTTVKAVYKKDGKVVAESKEVKVSAEGAAVASISNWTVAEQNKADFTSKDFKQNNKVYEGDNAYVQVELKDQFNAVTTGKVEYESLNTEVAVVDKATGKVTVLSAGKAPVKVTVKDSKGKELVSKTVEIEAFAQKAMKEIKLEKTNVALSTKDVTDLKVKAPVLDQYGKEFTAPVTVKVLDKDGKELKEQKLEAKYVNKELVLNAAGQEAGNYTVVLTAKSGEKEAKATLALELKAPGAFSKFEVRGLEKELDKYVTEENQKNAMTVSVLPVDANGLVLKGAEAAELKVTTTNKEGKEVDATDAQVTVQNNSVITVGQGAKAGETYKVTVVLDGKLITTHSFKVVDTAPTAKGLAVEFTSTSLKEVAPNADLKAALLNILSVDGVPATTAKATVSNVEFVSADTNVVAENGTVGAKGATSIYVKNLTVVKDGKEQKVEFDKAVQVAVSIKEAKPATK</sequence>
<proteinExistence type="evidence at protein level"/>
<keyword id="KW-0002">3D-structure</keyword>
<keyword id="KW-0134">Cell wall</keyword>
<keyword id="KW-0903">Direct protein sequencing</keyword>
<keyword id="KW-0325">Glycoprotein</keyword>
<keyword id="KW-1185">Reference proteome</keyword>
<keyword id="KW-0677">Repeat</keyword>
<keyword id="KW-0701">S-layer</keyword>
<keyword id="KW-0964">Secreted</keyword>
<keyword id="KW-0732">Signal</keyword>
<feature type="signal peptide" evidence="3">
    <location>
        <begin position="1"/>
        <end position="29"/>
    </location>
</feature>
<feature type="chain" id="PRO_0000032627" description="S-layer protein sap">
    <location>
        <begin position="30"/>
        <end position="814"/>
    </location>
</feature>
<feature type="domain" description="SLH 1" evidence="2">
    <location>
        <begin position="30"/>
        <end position="93"/>
    </location>
</feature>
<feature type="domain" description="SLH 2" evidence="2">
    <location>
        <begin position="94"/>
        <end position="150"/>
    </location>
</feature>
<feature type="domain" description="SLH 3" evidence="2">
    <location>
        <begin position="152"/>
        <end position="214"/>
    </location>
</feature>
<feature type="domain" description="BIG2" evidence="1">
    <location>
        <begin position="403"/>
        <end position="479"/>
    </location>
</feature>
<feature type="helix" evidence="4">
    <location>
        <begin position="44"/>
        <end position="52"/>
    </location>
</feature>
<feature type="helix" evidence="4">
    <location>
        <begin position="72"/>
        <end position="82"/>
    </location>
</feature>
<feature type="helix" evidence="4">
    <location>
        <begin position="96"/>
        <end position="98"/>
    </location>
</feature>
<feature type="helix" evidence="4">
    <location>
        <begin position="104"/>
        <end position="112"/>
    </location>
</feature>
<feature type="helix" evidence="4">
    <location>
        <begin position="131"/>
        <end position="142"/>
    </location>
</feature>
<feature type="helix" evidence="4">
    <location>
        <begin position="144"/>
        <end position="147"/>
    </location>
</feature>
<feature type="strand" evidence="4">
    <location>
        <begin position="148"/>
        <end position="150"/>
    </location>
</feature>
<feature type="helix" evidence="4">
    <location>
        <begin position="157"/>
        <end position="160"/>
    </location>
</feature>
<feature type="strand" evidence="4">
    <location>
        <begin position="163"/>
        <end position="165"/>
    </location>
</feature>
<feature type="helix" evidence="4">
    <location>
        <begin position="166"/>
        <end position="174"/>
    </location>
</feature>
<feature type="helix" evidence="4">
    <location>
        <begin position="193"/>
        <end position="207"/>
    </location>
</feature>
<feature type="strand" evidence="7">
    <location>
        <begin position="218"/>
        <end position="221"/>
    </location>
</feature>
<feature type="strand" evidence="7">
    <location>
        <begin position="224"/>
        <end position="228"/>
    </location>
</feature>
<feature type="helix" evidence="7">
    <location>
        <begin position="238"/>
        <end position="240"/>
    </location>
</feature>
<feature type="strand" evidence="7">
    <location>
        <begin position="241"/>
        <end position="245"/>
    </location>
</feature>
<feature type="turn" evidence="7">
    <location>
        <begin position="246"/>
        <end position="248"/>
    </location>
</feature>
<feature type="strand" evidence="7">
    <location>
        <begin position="254"/>
        <end position="259"/>
    </location>
</feature>
<feature type="strand" evidence="7">
    <location>
        <begin position="263"/>
        <end position="272"/>
    </location>
</feature>
<feature type="strand" evidence="7">
    <location>
        <begin position="279"/>
        <end position="284"/>
    </location>
</feature>
<feature type="turn" evidence="7">
    <location>
        <begin position="285"/>
        <end position="287"/>
    </location>
</feature>
<feature type="strand" evidence="7">
    <location>
        <begin position="288"/>
        <end position="293"/>
    </location>
</feature>
<feature type="strand" evidence="7">
    <location>
        <begin position="300"/>
        <end position="304"/>
    </location>
</feature>
<feature type="strand" evidence="7">
    <location>
        <begin position="306"/>
        <end position="308"/>
    </location>
</feature>
<feature type="strand" evidence="6">
    <location>
        <begin position="313"/>
        <end position="316"/>
    </location>
</feature>
<feature type="strand" evidence="7">
    <location>
        <begin position="319"/>
        <end position="322"/>
    </location>
</feature>
<feature type="strand" evidence="7">
    <location>
        <begin position="333"/>
        <end position="338"/>
    </location>
</feature>
<feature type="helix" evidence="7">
    <location>
        <begin position="342"/>
        <end position="344"/>
    </location>
</feature>
<feature type="strand" evidence="8">
    <location>
        <begin position="349"/>
        <end position="351"/>
    </location>
</feature>
<feature type="strand" evidence="7">
    <location>
        <begin position="359"/>
        <end position="367"/>
    </location>
</feature>
<feature type="strand" evidence="7">
    <location>
        <begin position="370"/>
        <end position="374"/>
    </location>
</feature>
<feature type="strand" evidence="7">
    <location>
        <begin position="378"/>
        <end position="380"/>
    </location>
</feature>
<feature type="strand" evidence="10">
    <location>
        <begin position="387"/>
        <end position="397"/>
    </location>
</feature>
<feature type="turn" evidence="5">
    <location>
        <begin position="398"/>
        <end position="400"/>
    </location>
</feature>
<feature type="strand" evidence="10">
    <location>
        <begin position="403"/>
        <end position="405"/>
    </location>
</feature>
<feature type="strand" evidence="10">
    <location>
        <begin position="413"/>
        <end position="415"/>
    </location>
</feature>
<feature type="strand" evidence="10">
    <location>
        <begin position="421"/>
        <end position="428"/>
    </location>
</feature>
<feature type="strand" evidence="6">
    <location>
        <begin position="431"/>
        <end position="434"/>
    </location>
</feature>
<feature type="strand" evidence="10">
    <location>
        <begin position="437"/>
        <end position="443"/>
    </location>
</feature>
<feature type="turn" evidence="10">
    <location>
        <begin position="445"/>
        <end position="447"/>
    </location>
</feature>
<feature type="strand" evidence="10">
    <location>
        <begin position="448"/>
        <end position="450"/>
    </location>
</feature>
<feature type="turn" evidence="10">
    <location>
        <begin position="452"/>
        <end position="454"/>
    </location>
</feature>
<feature type="strand" evidence="10">
    <location>
        <begin position="456"/>
        <end position="472"/>
    </location>
</feature>
<feature type="turn" evidence="5">
    <location>
        <begin position="474"/>
        <end position="476"/>
    </location>
</feature>
<feature type="strand" evidence="10">
    <location>
        <begin position="478"/>
        <end position="489"/>
    </location>
</feature>
<feature type="strand" evidence="9">
    <location>
        <begin position="494"/>
        <end position="497"/>
    </location>
</feature>
<feature type="strand" evidence="9">
    <location>
        <begin position="502"/>
        <end position="507"/>
    </location>
</feature>
<feature type="strand" evidence="9">
    <location>
        <begin position="514"/>
        <end position="517"/>
    </location>
</feature>
<feature type="strand" evidence="9">
    <location>
        <begin position="520"/>
        <end position="522"/>
    </location>
</feature>
<feature type="strand" evidence="9">
    <location>
        <begin position="532"/>
        <end position="537"/>
    </location>
</feature>
<feature type="strand" evidence="9">
    <location>
        <begin position="539"/>
        <end position="541"/>
    </location>
</feature>
<feature type="strand" evidence="9">
    <location>
        <begin position="549"/>
        <end position="554"/>
    </location>
</feature>
<feature type="strand" evidence="9">
    <location>
        <begin position="557"/>
        <end position="561"/>
    </location>
</feature>
<feature type="strand" evidence="9">
    <location>
        <begin position="567"/>
        <end position="578"/>
    </location>
</feature>
<feature type="strand" evidence="9">
    <location>
        <begin position="581"/>
        <end position="592"/>
    </location>
</feature>
<feature type="strand" evidence="9">
    <location>
        <begin position="599"/>
        <end position="603"/>
    </location>
</feature>
<feature type="strand" evidence="9">
    <location>
        <begin position="607"/>
        <end position="610"/>
    </location>
</feature>
<feature type="strand" evidence="9">
    <location>
        <begin position="621"/>
        <end position="623"/>
    </location>
</feature>
<feature type="strand" evidence="9">
    <location>
        <begin position="625"/>
        <end position="629"/>
    </location>
</feature>
<feature type="strand" evidence="6">
    <location>
        <begin position="631"/>
        <end position="633"/>
    </location>
</feature>
<feature type="strand" evidence="9">
    <location>
        <begin position="643"/>
        <end position="649"/>
    </location>
</feature>
<feature type="strand" evidence="9">
    <location>
        <begin position="655"/>
        <end position="657"/>
    </location>
</feature>
<feature type="turn" evidence="9">
    <location>
        <begin position="660"/>
        <end position="662"/>
    </location>
</feature>
<feature type="strand" evidence="9">
    <location>
        <begin position="663"/>
        <end position="666"/>
    </location>
</feature>
<feature type="turn" evidence="9">
    <location>
        <begin position="667"/>
        <end position="669"/>
    </location>
</feature>
<feature type="strand" evidence="9">
    <location>
        <begin position="670"/>
        <end position="673"/>
    </location>
</feature>
<feature type="strand" evidence="9">
    <location>
        <begin position="682"/>
        <end position="689"/>
    </location>
</feature>
<feature type="strand" evidence="9">
    <location>
        <begin position="692"/>
        <end position="702"/>
    </location>
</feature>
<feature type="helix" evidence="5">
    <location>
        <begin position="706"/>
        <end position="709"/>
    </location>
</feature>
<feature type="strand" evidence="10">
    <location>
        <begin position="713"/>
        <end position="716"/>
    </location>
</feature>
<feature type="strand" evidence="10">
    <location>
        <begin position="718"/>
        <end position="723"/>
    </location>
</feature>
<feature type="helix" evidence="10">
    <location>
        <begin position="729"/>
        <end position="733"/>
    </location>
</feature>
<feature type="helix" evidence="10">
    <location>
        <begin position="734"/>
        <end position="736"/>
    </location>
</feature>
<feature type="strand" evidence="10">
    <location>
        <begin position="737"/>
        <end position="739"/>
    </location>
</feature>
<feature type="turn" evidence="10">
    <location>
        <begin position="744"/>
        <end position="748"/>
    </location>
</feature>
<feature type="strand" evidence="10">
    <location>
        <begin position="750"/>
        <end position="759"/>
    </location>
</feature>
<feature type="turn" evidence="10">
    <location>
        <begin position="761"/>
        <end position="763"/>
    </location>
</feature>
<feature type="strand" evidence="10">
    <location>
        <begin position="768"/>
        <end position="770"/>
    </location>
</feature>
<feature type="strand" evidence="10">
    <location>
        <begin position="775"/>
        <end position="787"/>
    </location>
</feature>
<feature type="strand" evidence="10">
    <location>
        <begin position="790"/>
        <end position="806"/>
    </location>
</feature>
<accession>P49051</accession>
<accession>Q6I2R3</accession>
<accession>Q6KWJ4</accession>
<dbReference type="EMBL" id="Z36946">
    <property type="protein sequence ID" value="CAA85408.1"/>
    <property type="molecule type" value="Genomic_DNA"/>
</dbReference>
<dbReference type="EMBL" id="AE016879">
    <property type="protein sequence ID" value="AAP24883.1"/>
    <property type="molecule type" value="Genomic_DNA"/>
</dbReference>
<dbReference type="EMBL" id="AE017334">
    <property type="protein sequence ID" value="AAT29996.1"/>
    <property type="molecule type" value="Genomic_DNA"/>
</dbReference>
<dbReference type="EMBL" id="AE017225">
    <property type="protein sequence ID" value="AAT53168.1"/>
    <property type="molecule type" value="Genomic_DNA"/>
</dbReference>
<dbReference type="PIR" id="I40048">
    <property type="entry name" value="I40048"/>
</dbReference>
<dbReference type="RefSeq" id="NP_843397.1">
    <property type="nucleotide sequence ID" value="NC_003997.3"/>
</dbReference>
<dbReference type="RefSeq" id="WP_001140751.1">
    <property type="nucleotide sequence ID" value="NZ_WXXJ01000017.1"/>
</dbReference>
<dbReference type="RefSeq" id="YP_027117.1">
    <property type="nucleotide sequence ID" value="NC_005945.1"/>
</dbReference>
<dbReference type="PDB" id="3PYW">
    <property type="method" value="X-ray"/>
    <property type="resolution" value="1.80 A"/>
    <property type="chains" value="A=31-210"/>
</dbReference>
<dbReference type="PDB" id="6BT4">
    <property type="method" value="X-ray"/>
    <property type="resolution" value="2.31 A"/>
    <property type="chains" value="A=31-210"/>
</dbReference>
<dbReference type="PDB" id="6HHU">
    <property type="method" value="X-ray"/>
    <property type="resolution" value="2.70 A"/>
    <property type="chains" value="A=216-814"/>
</dbReference>
<dbReference type="PDB" id="6QX4">
    <property type="method" value="X-ray"/>
    <property type="resolution" value="3.27 A"/>
    <property type="chains" value="A/B=216-814"/>
</dbReference>
<dbReference type="PDB" id="8RW9">
    <property type="method" value="X-ray"/>
    <property type="resolution" value="1.99 A"/>
    <property type="chains" value="E/F/G/H=215-383"/>
</dbReference>
<dbReference type="PDB" id="8RWF">
    <property type="method" value="X-ray"/>
    <property type="resolution" value="3.11 A"/>
    <property type="chains" value="A/B/D=215-384"/>
</dbReference>
<dbReference type="PDB" id="8RX2">
    <property type="method" value="X-ray"/>
    <property type="resolution" value="2.01 A"/>
    <property type="chains" value="A/B/C/D=215-384"/>
</dbReference>
<dbReference type="PDB" id="8S80">
    <property type="method" value="X-ray"/>
    <property type="resolution" value="2.48 A"/>
    <property type="chains" value="A/B/C/F=492-704"/>
</dbReference>
<dbReference type="PDB" id="8S83">
    <property type="method" value="X-ray"/>
    <property type="resolution" value="2.07 A"/>
    <property type="chains" value="A/B=385-491, C/D=710-811"/>
</dbReference>
<dbReference type="PDB" id="9G93">
    <property type="method" value="EM"/>
    <property type="resolution" value="7.20 A"/>
    <property type="chains" value="A/B/C/D/E/F/G/I/J/K/L=1-814"/>
</dbReference>
<dbReference type="PDBsum" id="3PYW"/>
<dbReference type="PDBsum" id="6BT4"/>
<dbReference type="PDBsum" id="6HHU"/>
<dbReference type="PDBsum" id="6QX4"/>
<dbReference type="PDBsum" id="8RW9"/>
<dbReference type="PDBsum" id="8RWF"/>
<dbReference type="PDBsum" id="8RX2"/>
<dbReference type="PDBsum" id="8S80"/>
<dbReference type="PDBsum" id="8S83"/>
<dbReference type="PDBsum" id="9G93"/>
<dbReference type="EMDB" id="EMD-45459"/>
<dbReference type="SMR" id="P49051"/>
<dbReference type="STRING" id="261594.GBAA_0885"/>
<dbReference type="ABCD" id="P49051">
    <property type="antibodies" value="12 sequenced antibodies"/>
</dbReference>
<dbReference type="GeneID" id="45020949"/>
<dbReference type="KEGG" id="ban:BA_0885"/>
<dbReference type="KEGG" id="bar:GBAA_0885"/>
<dbReference type="KEGG" id="bat:BAS0841"/>
<dbReference type="PATRIC" id="fig|198094.11.peg.882"/>
<dbReference type="eggNOG" id="COG0860">
    <property type="taxonomic scope" value="Bacteria"/>
</dbReference>
<dbReference type="HOGENOM" id="CLU_345045_0_0_9"/>
<dbReference type="OMA" id="FIANTDK"/>
<dbReference type="OrthoDB" id="504962at2"/>
<dbReference type="EvolutionaryTrace" id="P49051"/>
<dbReference type="Proteomes" id="UP000000427">
    <property type="component" value="Chromosome"/>
</dbReference>
<dbReference type="Proteomes" id="UP000000594">
    <property type="component" value="Chromosome"/>
</dbReference>
<dbReference type="GO" id="GO:0005576">
    <property type="term" value="C:extracellular region"/>
    <property type="evidence" value="ECO:0007669"/>
    <property type="project" value="UniProtKB-KW"/>
</dbReference>
<dbReference type="GO" id="GO:0030115">
    <property type="term" value="C:S-layer"/>
    <property type="evidence" value="ECO:0007669"/>
    <property type="project" value="UniProtKB-SubCell"/>
</dbReference>
<dbReference type="Gene3D" id="2.60.40.1080">
    <property type="match status" value="1"/>
</dbReference>
<dbReference type="Gene3D" id="2.60.40.1220">
    <property type="match status" value="1"/>
</dbReference>
<dbReference type="InterPro" id="IPR003343">
    <property type="entry name" value="Big_2"/>
</dbReference>
<dbReference type="InterPro" id="IPR051465">
    <property type="entry name" value="Cell_Envelope_Struct_Comp"/>
</dbReference>
<dbReference type="InterPro" id="IPR014755">
    <property type="entry name" value="Cu-Rt/internalin_Ig-like"/>
</dbReference>
<dbReference type="InterPro" id="IPR008964">
    <property type="entry name" value="Invasin/intimin_cell_adhesion"/>
</dbReference>
<dbReference type="InterPro" id="IPR032812">
    <property type="entry name" value="SbsA_Ig"/>
</dbReference>
<dbReference type="InterPro" id="IPR001119">
    <property type="entry name" value="SLH_dom"/>
</dbReference>
<dbReference type="PANTHER" id="PTHR43308:SF1">
    <property type="entry name" value="OUTER MEMBRANE PROTEIN ALPHA"/>
    <property type="match status" value="1"/>
</dbReference>
<dbReference type="PANTHER" id="PTHR43308">
    <property type="entry name" value="OUTER MEMBRANE PROTEIN ALPHA-RELATED"/>
    <property type="match status" value="1"/>
</dbReference>
<dbReference type="Pfam" id="PF02368">
    <property type="entry name" value="Big_2"/>
    <property type="match status" value="1"/>
</dbReference>
<dbReference type="Pfam" id="PF13205">
    <property type="entry name" value="Big_5"/>
    <property type="match status" value="1"/>
</dbReference>
<dbReference type="Pfam" id="PF00395">
    <property type="entry name" value="SLH"/>
    <property type="match status" value="2"/>
</dbReference>
<dbReference type="SMART" id="SM00635">
    <property type="entry name" value="BID_2"/>
    <property type="match status" value="1"/>
</dbReference>
<dbReference type="SUPFAM" id="SSF49373">
    <property type="entry name" value="Invasin/intimin cell-adhesion fragments"/>
    <property type="match status" value="1"/>
</dbReference>
<dbReference type="PROSITE" id="PS51272">
    <property type="entry name" value="SLH"/>
    <property type="match status" value="3"/>
</dbReference>
<reference key="1">
    <citation type="journal article" date="1995" name="J. Bacteriol.">
        <title>Characterization of the Bacillus anthracis S-layer: cloning and sequencing of the structural gene.</title>
        <authorList>
            <person name="Etienne-Toumelin I."/>
            <person name="Sirard J."/>
            <person name="Duflot E."/>
            <person name="Mock M."/>
            <person name="Fouet A."/>
        </authorList>
    </citation>
    <scope>NUCLEOTIDE SEQUENCE [GENOMIC DNA]</scope>
    <scope>PROTEIN SEQUENCE OF 30-40; 209-218; 281-291 AND 571-580</scope>
    <source>
        <strain>Sterne</strain>
    </source>
</reference>
<reference key="2">
    <citation type="journal article" date="2003" name="Nature">
        <title>The genome sequence of Bacillus anthracis Ames and comparison to closely related bacteria.</title>
        <authorList>
            <person name="Read T.D."/>
            <person name="Peterson S.N."/>
            <person name="Tourasse N.J."/>
            <person name="Baillie L.W."/>
            <person name="Paulsen I.T."/>
            <person name="Nelson K.E."/>
            <person name="Tettelin H."/>
            <person name="Fouts D.E."/>
            <person name="Eisen J.A."/>
            <person name="Gill S.R."/>
            <person name="Holtzapple E.K."/>
            <person name="Okstad O.A."/>
            <person name="Helgason E."/>
            <person name="Rilstone J."/>
            <person name="Wu M."/>
            <person name="Kolonay J.F."/>
            <person name="Beanan M.J."/>
            <person name="Dodson R.J."/>
            <person name="Brinkac L.M."/>
            <person name="Gwinn M.L."/>
            <person name="DeBoy R.T."/>
            <person name="Madpu R."/>
            <person name="Daugherty S.C."/>
            <person name="Durkin A.S."/>
            <person name="Haft D.H."/>
            <person name="Nelson W.C."/>
            <person name="Peterson J.D."/>
            <person name="Pop M."/>
            <person name="Khouri H.M."/>
            <person name="Radune D."/>
            <person name="Benton J.L."/>
            <person name="Mahamoud Y."/>
            <person name="Jiang L."/>
            <person name="Hance I.R."/>
            <person name="Weidman J.F."/>
            <person name="Berry K.J."/>
            <person name="Plaut R.D."/>
            <person name="Wolf A.M."/>
            <person name="Watkins K.L."/>
            <person name="Nierman W.C."/>
            <person name="Hazen A."/>
            <person name="Cline R.T."/>
            <person name="Redmond C."/>
            <person name="Thwaite J.E."/>
            <person name="White O."/>
            <person name="Salzberg S.L."/>
            <person name="Thomason B."/>
            <person name="Friedlander A.M."/>
            <person name="Koehler T.M."/>
            <person name="Hanna P.C."/>
            <person name="Kolstoe A.-B."/>
            <person name="Fraser C.M."/>
        </authorList>
    </citation>
    <scope>NUCLEOTIDE SEQUENCE [LARGE SCALE GENOMIC DNA]</scope>
    <source>
        <strain>Ames / isolate Porton</strain>
    </source>
</reference>
<reference key="3">
    <citation type="journal article" date="2009" name="J. Bacteriol.">
        <title>The complete genome sequence of Bacillus anthracis Ames 'Ancestor'.</title>
        <authorList>
            <person name="Ravel J."/>
            <person name="Jiang L."/>
            <person name="Stanley S.T."/>
            <person name="Wilson M.R."/>
            <person name="Decker R.S."/>
            <person name="Read T.D."/>
            <person name="Worsham P."/>
            <person name="Keim P.S."/>
            <person name="Salzberg S.L."/>
            <person name="Fraser-Liggett C.M."/>
            <person name="Rasko D.A."/>
        </authorList>
    </citation>
    <scope>NUCLEOTIDE SEQUENCE [LARGE SCALE GENOMIC DNA]</scope>
    <source>
        <strain>Ames ancestor</strain>
    </source>
</reference>
<reference key="4">
    <citation type="submission" date="2004-01" db="EMBL/GenBank/DDBJ databases">
        <title>Complete genome sequence of Bacillus anthracis Sterne.</title>
        <authorList>
            <person name="Brettin T.S."/>
            <person name="Bruce D."/>
            <person name="Challacombe J.F."/>
            <person name="Gilna P."/>
            <person name="Han C."/>
            <person name="Hill K."/>
            <person name="Hitchcock P."/>
            <person name="Jackson P."/>
            <person name="Keim P."/>
            <person name="Longmire J."/>
            <person name="Lucas S."/>
            <person name="Okinaka R."/>
            <person name="Richardson P."/>
            <person name="Rubin E."/>
            <person name="Tice H."/>
        </authorList>
    </citation>
    <scope>NUCLEOTIDE SEQUENCE [LARGE SCALE GENOMIC DNA]</scope>
    <source>
        <strain>Sterne</strain>
    </source>
</reference>
<name>SLAP1_BACAN</name>
<evidence type="ECO:0000255" key="1"/>
<evidence type="ECO:0000255" key="2">
    <source>
        <dbReference type="PROSITE-ProRule" id="PRU00777"/>
    </source>
</evidence>
<evidence type="ECO:0000269" key="3">
    <source>
    </source>
</evidence>
<evidence type="ECO:0007829" key="4">
    <source>
        <dbReference type="PDB" id="3PYW"/>
    </source>
</evidence>
<evidence type="ECO:0007829" key="5">
    <source>
        <dbReference type="PDB" id="6HHU"/>
    </source>
</evidence>
<evidence type="ECO:0007829" key="6">
    <source>
        <dbReference type="PDB" id="6QX4"/>
    </source>
</evidence>
<evidence type="ECO:0007829" key="7">
    <source>
        <dbReference type="PDB" id="8RW9"/>
    </source>
</evidence>
<evidence type="ECO:0007829" key="8">
    <source>
        <dbReference type="PDB" id="8RX2"/>
    </source>
</evidence>
<evidence type="ECO:0007829" key="9">
    <source>
        <dbReference type="PDB" id="8S80"/>
    </source>
</evidence>
<evidence type="ECO:0007829" key="10">
    <source>
        <dbReference type="PDB" id="8S83"/>
    </source>
</evidence>
<organism>
    <name type="scientific">Bacillus anthracis</name>
    <dbReference type="NCBI Taxonomy" id="1392"/>
    <lineage>
        <taxon>Bacteria</taxon>
        <taxon>Bacillati</taxon>
        <taxon>Bacillota</taxon>
        <taxon>Bacilli</taxon>
        <taxon>Bacillales</taxon>
        <taxon>Bacillaceae</taxon>
        <taxon>Bacillus</taxon>
        <taxon>Bacillus cereus group</taxon>
    </lineage>
</organism>